<name>PNP_FERNB</name>
<proteinExistence type="inferred from homology"/>
<keyword id="KW-0963">Cytoplasm</keyword>
<keyword id="KW-0460">Magnesium</keyword>
<keyword id="KW-0479">Metal-binding</keyword>
<keyword id="KW-0548">Nucleotidyltransferase</keyword>
<keyword id="KW-1185">Reference proteome</keyword>
<keyword id="KW-0694">RNA-binding</keyword>
<keyword id="KW-0808">Transferase</keyword>
<evidence type="ECO:0000255" key="1">
    <source>
        <dbReference type="HAMAP-Rule" id="MF_01595"/>
    </source>
</evidence>
<feature type="chain" id="PRO_0000329646" description="Polyribonucleotide nucleotidyltransferase">
    <location>
        <begin position="1"/>
        <end position="693"/>
    </location>
</feature>
<feature type="domain" description="KH" evidence="1">
    <location>
        <begin position="557"/>
        <end position="617"/>
    </location>
</feature>
<feature type="domain" description="S1 motif" evidence="1">
    <location>
        <begin position="627"/>
        <end position="691"/>
    </location>
</feature>
<feature type="binding site" evidence="1">
    <location>
        <position position="490"/>
    </location>
    <ligand>
        <name>Mg(2+)</name>
        <dbReference type="ChEBI" id="CHEBI:18420"/>
    </ligand>
</feature>
<feature type="binding site" evidence="1">
    <location>
        <position position="496"/>
    </location>
    <ligand>
        <name>Mg(2+)</name>
        <dbReference type="ChEBI" id="CHEBI:18420"/>
    </ligand>
</feature>
<comment type="function">
    <text evidence="1">Involved in mRNA degradation. Catalyzes the phosphorolysis of single-stranded polyribonucleotides processively in the 3'- to 5'-direction.</text>
</comment>
<comment type="catalytic activity">
    <reaction evidence="1">
        <text>RNA(n+1) + phosphate = RNA(n) + a ribonucleoside 5'-diphosphate</text>
        <dbReference type="Rhea" id="RHEA:22096"/>
        <dbReference type="Rhea" id="RHEA-COMP:14527"/>
        <dbReference type="Rhea" id="RHEA-COMP:17342"/>
        <dbReference type="ChEBI" id="CHEBI:43474"/>
        <dbReference type="ChEBI" id="CHEBI:57930"/>
        <dbReference type="ChEBI" id="CHEBI:140395"/>
        <dbReference type="EC" id="2.7.7.8"/>
    </reaction>
</comment>
<comment type="cofactor">
    <cofactor evidence="1">
        <name>Mg(2+)</name>
        <dbReference type="ChEBI" id="CHEBI:18420"/>
    </cofactor>
</comment>
<comment type="subcellular location">
    <subcellularLocation>
        <location evidence="1">Cytoplasm</location>
    </subcellularLocation>
</comment>
<comment type="similarity">
    <text evidence="1">Belongs to the polyribonucleotide nucleotidyltransferase family.</text>
</comment>
<sequence length="693" mass="77260">MKEWRKNLFGREWLFQHGKVAKQSAGSIWARFGDSVVLATVNVSDNVVEGIDFVPLTVEFMEKFYAAGKIPGGFVKREGKPSESGILSSRLIDRPIRPLFPKNLRNEVQVIVTVLSVDPNCPTDVLGITAASLALNISRVPFDGIVAGVQIGYVDGQFIVFPTAEQLERSKIDIVVAGTKDAITMVEGEAKEVTEEEMLQALMTAHEAIKQIVAFQEEVIKEFNVEKMPLPEPKYNVELVEKFVEYIDMTELEKRIFARGKQERAEMADEYYESIVQKFFEDNNIPEEEQEEYAIPLKEKYDEISKKLMRKIIIERGLRADGRGPKDIRPITCEVGLLPRTHGSSLFTRGETQSLGIVTLGSPAEEQIIDTLIEEGTKRFILHYNFPPFSTGEVKPLRGPSRREIGHGHLAERAVKAIIPPEDEFPYVIRVVSEILESNGSSSMATVCSASLALMDAGVPTKKHVAGVAMGLILEEGKGVILTDIIGLEDHWGDMDFKVAGTKDGITAFQMDCKVSGVSEELLRQALYQAKEARMFILDKLYETISEPRKELSPYAPRISWFFIDPTRSGELIGPGGKTIKSIIKMFDVEISLDDSTGKVTVSGVDAEKVQEAVEYIQNMFRDISIGDLYTGKVTRVENYGIFVEIMPGKIGLVHSSKLGNVKPTSFKVGDKIKVEVINIDDAGRLQFRRLEE</sequence>
<accession>A7HK24</accession>
<gene>
    <name evidence="1" type="primary">pnp</name>
    <name type="ordered locus">Fnod_0392</name>
</gene>
<protein>
    <recommendedName>
        <fullName evidence="1">Polyribonucleotide nucleotidyltransferase</fullName>
        <ecNumber evidence="1">2.7.7.8</ecNumber>
    </recommendedName>
    <alternativeName>
        <fullName evidence="1">Polynucleotide phosphorylase</fullName>
        <shortName evidence="1">PNPase</shortName>
    </alternativeName>
</protein>
<organism>
    <name type="scientific">Fervidobacterium nodosum (strain ATCC 35602 / DSM 5306 / Rt17-B1)</name>
    <dbReference type="NCBI Taxonomy" id="381764"/>
    <lineage>
        <taxon>Bacteria</taxon>
        <taxon>Thermotogati</taxon>
        <taxon>Thermotogota</taxon>
        <taxon>Thermotogae</taxon>
        <taxon>Thermotogales</taxon>
        <taxon>Fervidobacteriaceae</taxon>
        <taxon>Fervidobacterium</taxon>
    </lineage>
</organism>
<dbReference type="EC" id="2.7.7.8" evidence="1"/>
<dbReference type="EMBL" id="CP000771">
    <property type="protein sequence ID" value="ABS60257.1"/>
    <property type="molecule type" value="Genomic_DNA"/>
</dbReference>
<dbReference type="RefSeq" id="WP_011993577.1">
    <property type="nucleotide sequence ID" value="NC_009718.1"/>
</dbReference>
<dbReference type="SMR" id="A7HK24"/>
<dbReference type="STRING" id="381764.Fnod_0392"/>
<dbReference type="KEGG" id="fno:Fnod_0392"/>
<dbReference type="eggNOG" id="COG1185">
    <property type="taxonomic scope" value="Bacteria"/>
</dbReference>
<dbReference type="HOGENOM" id="CLU_004217_2_2_0"/>
<dbReference type="OrthoDB" id="9804305at2"/>
<dbReference type="Proteomes" id="UP000002415">
    <property type="component" value="Chromosome"/>
</dbReference>
<dbReference type="GO" id="GO:0005829">
    <property type="term" value="C:cytosol"/>
    <property type="evidence" value="ECO:0007669"/>
    <property type="project" value="TreeGrafter"/>
</dbReference>
<dbReference type="GO" id="GO:0000175">
    <property type="term" value="F:3'-5'-RNA exonuclease activity"/>
    <property type="evidence" value="ECO:0007669"/>
    <property type="project" value="TreeGrafter"/>
</dbReference>
<dbReference type="GO" id="GO:0000287">
    <property type="term" value="F:magnesium ion binding"/>
    <property type="evidence" value="ECO:0007669"/>
    <property type="project" value="UniProtKB-UniRule"/>
</dbReference>
<dbReference type="GO" id="GO:0004654">
    <property type="term" value="F:polyribonucleotide nucleotidyltransferase activity"/>
    <property type="evidence" value="ECO:0007669"/>
    <property type="project" value="UniProtKB-UniRule"/>
</dbReference>
<dbReference type="GO" id="GO:0003723">
    <property type="term" value="F:RNA binding"/>
    <property type="evidence" value="ECO:0007669"/>
    <property type="project" value="UniProtKB-UniRule"/>
</dbReference>
<dbReference type="GO" id="GO:0006402">
    <property type="term" value="P:mRNA catabolic process"/>
    <property type="evidence" value="ECO:0007669"/>
    <property type="project" value="UniProtKB-UniRule"/>
</dbReference>
<dbReference type="GO" id="GO:0006396">
    <property type="term" value="P:RNA processing"/>
    <property type="evidence" value="ECO:0007669"/>
    <property type="project" value="InterPro"/>
</dbReference>
<dbReference type="CDD" id="cd02393">
    <property type="entry name" value="KH-I_PNPase"/>
    <property type="match status" value="1"/>
</dbReference>
<dbReference type="CDD" id="cd11363">
    <property type="entry name" value="RNase_PH_PNPase_1"/>
    <property type="match status" value="1"/>
</dbReference>
<dbReference type="CDD" id="cd11364">
    <property type="entry name" value="RNase_PH_PNPase_2"/>
    <property type="match status" value="1"/>
</dbReference>
<dbReference type="FunFam" id="3.30.1370.10:FF:000001">
    <property type="entry name" value="Polyribonucleotide nucleotidyltransferase"/>
    <property type="match status" value="1"/>
</dbReference>
<dbReference type="FunFam" id="3.30.230.70:FF:000001">
    <property type="entry name" value="Polyribonucleotide nucleotidyltransferase"/>
    <property type="match status" value="1"/>
</dbReference>
<dbReference type="FunFam" id="3.30.230.70:FF:000002">
    <property type="entry name" value="Polyribonucleotide nucleotidyltransferase"/>
    <property type="match status" value="1"/>
</dbReference>
<dbReference type="Gene3D" id="3.30.230.70">
    <property type="entry name" value="GHMP Kinase, N-terminal domain"/>
    <property type="match status" value="2"/>
</dbReference>
<dbReference type="Gene3D" id="3.30.1370.10">
    <property type="entry name" value="K Homology domain, type 1"/>
    <property type="match status" value="1"/>
</dbReference>
<dbReference type="Gene3D" id="2.40.50.140">
    <property type="entry name" value="Nucleic acid-binding proteins"/>
    <property type="match status" value="1"/>
</dbReference>
<dbReference type="HAMAP" id="MF_01595">
    <property type="entry name" value="PNPase"/>
    <property type="match status" value="1"/>
</dbReference>
<dbReference type="InterPro" id="IPR001247">
    <property type="entry name" value="ExoRNase_PH_dom1"/>
</dbReference>
<dbReference type="InterPro" id="IPR015847">
    <property type="entry name" value="ExoRNase_PH_dom2"/>
</dbReference>
<dbReference type="InterPro" id="IPR036345">
    <property type="entry name" value="ExoRNase_PH_dom2_sf"/>
</dbReference>
<dbReference type="InterPro" id="IPR004087">
    <property type="entry name" value="KH_dom"/>
</dbReference>
<dbReference type="InterPro" id="IPR004088">
    <property type="entry name" value="KH_dom_type_1"/>
</dbReference>
<dbReference type="InterPro" id="IPR036612">
    <property type="entry name" value="KH_dom_type_1_sf"/>
</dbReference>
<dbReference type="InterPro" id="IPR012340">
    <property type="entry name" value="NA-bd_OB-fold"/>
</dbReference>
<dbReference type="InterPro" id="IPR012162">
    <property type="entry name" value="PNPase"/>
</dbReference>
<dbReference type="InterPro" id="IPR027408">
    <property type="entry name" value="PNPase/RNase_PH_dom_sf"/>
</dbReference>
<dbReference type="InterPro" id="IPR015848">
    <property type="entry name" value="PNPase_PH_RNA-bd_bac/org-type"/>
</dbReference>
<dbReference type="InterPro" id="IPR036456">
    <property type="entry name" value="PNPase_PH_RNA-bd_sf"/>
</dbReference>
<dbReference type="InterPro" id="IPR020568">
    <property type="entry name" value="Ribosomal_Su5_D2-typ_SF"/>
</dbReference>
<dbReference type="InterPro" id="IPR003029">
    <property type="entry name" value="S1_domain"/>
</dbReference>
<dbReference type="NCBIfam" id="TIGR03591">
    <property type="entry name" value="polynuc_phos"/>
    <property type="match status" value="1"/>
</dbReference>
<dbReference type="NCBIfam" id="NF008805">
    <property type="entry name" value="PRK11824.1"/>
    <property type="match status" value="1"/>
</dbReference>
<dbReference type="PANTHER" id="PTHR11252">
    <property type="entry name" value="POLYRIBONUCLEOTIDE NUCLEOTIDYLTRANSFERASE"/>
    <property type="match status" value="1"/>
</dbReference>
<dbReference type="PANTHER" id="PTHR11252:SF0">
    <property type="entry name" value="POLYRIBONUCLEOTIDE NUCLEOTIDYLTRANSFERASE 1, MITOCHONDRIAL"/>
    <property type="match status" value="1"/>
</dbReference>
<dbReference type="Pfam" id="PF00013">
    <property type="entry name" value="KH_1"/>
    <property type="match status" value="1"/>
</dbReference>
<dbReference type="Pfam" id="PF03726">
    <property type="entry name" value="PNPase"/>
    <property type="match status" value="1"/>
</dbReference>
<dbReference type="Pfam" id="PF01138">
    <property type="entry name" value="RNase_PH"/>
    <property type="match status" value="2"/>
</dbReference>
<dbReference type="Pfam" id="PF03725">
    <property type="entry name" value="RNase_PH_C"/>
    <property type="match status" value="2"/>
</dbReference>
<dbReference type="Pfam" id="PF00575">
    <property type="entry name" value="S1"/>
    <property type="match status" value="1"/>
</dbReference>
<dbReference type="PIRSF" id="PIRSF005499">
    <property type="entry name" value="PNPase"/>
    <property type="match status" value="1"/>
</dbReference>
<dbReference type="SMART" id="SM00322">
    <property type="entry name" value="KH"/>
    <property type="match status" value="1"/>
</dbReference>
<dbReference type="SMART" id="SM00316">
    <property type="entry name" value="S1"/>
    <property type="match status" value="1"/>
</dbReference>
<dbReference type="SUPFAM" id="SSF54791">
    <property type="entry name" value="Eukaryotic type KH-domain (KH-domain type I)"/>
    <property type="match status" value="1"/>
</dbReference>
<dbReference type="SUPFAM" id="SSF50249">
    <property type="entry name" value="Nucleic acid-binding proteins"/>
    <property type="match status" value="1"/>
</dbReference>
<dbReference type="SUPFAM" id="SSF46915">
    <property type="entry name" value="Polynucleotide phosphorylase/guanosine pentaphosphate synthase (PNPase/GPSI), domain 3"/>
    <property type="match status" value="1"/>
</dbReference>
<dbReference type="SUPFAM" id="SSF55666">
    <property type="entry name" value="Ribonuclease PH domain 2-like"/>
    <property type="match status" value="2"/>
</dbReference>
<dbReference type="SUPFAM" id="SSF54211">
    <property type="entry name" value="Ribosomal protein S5 domain 2-like"/>
    <property type="match status" value="2"/>
</dbReference>
<dbReference type="PROSITE" id="PS50084">
    <property type="entry name" value="KH_TYPE_1"/>
    <property type="match status" value="1"/>
</dbReference>
<dbReference type="PROSITE" id="PS50126">
    <property type="entry name" value="S1"/>
    <property type="match status" value="1"/>
</dbReference>
<reference key="1">
    <citation type="submission" date="2007-07" db="EMBL/GenBank/DDBJ databases">
        <title>Complete sequence of Fervidobacterium nodosum Rt17-B1.</title>
        <authorList>
            <consortium name="US DOE Joint Genome Institute"/>
            <person name="Copeland A."/>
            <person name="Lucas S."/>
            <person name="Lapidus A."/>
            <person name="Barry K."/>
            <person name="Glavina del Rio T."/>
            <person name="Dalin E."/>
            <person name="Tice H."/>
            <person name="Pitluck S."/>
            <person name="Saunders E."/>
            <person name="Brettin T."/>
            <person name="Bruce D."/>
            <person name="Detter J.C."/>
            <person name="Han C."/>
            <person name="Schmutz J."/>
            <person name="Larimer F."/>
            <person name="Land M."/>
            <person name="Hauser L."/>
            <person name="Kyrpides N."/>
            <person name="Mikhailova N."/>
            <person name="Nelson K."/>
            <person name="Gogarten J.P."/>
            <person name="Noll K."/>
            <person name="Richardson P."/>
        </authorList>
    </citation>
    <scope>NUCLEOTIDE SEQUENCE [LARGE SCALE GENOMIC DNA]</scope>
    <source>
        <strain>ATCC 35602 / DSM 5306 / Rt17-B1</strain>
    </source>
</reference>